<keyword id="KW-1003">Cell membrane</keyword>
<keyword id="KW-0134">Cell wall</keyword>
<keyword id="KW-0472">Membrane</keyword>
<keyword id="KW-0964">Secreted</keyword>
<keyword id="KW-0812">Transmembrane</keyword>
<keyword id="KW-1133">Transmembrane helix</keyword>
<organism>
    <name type="scientific">Staphylococcus aureus (strain MRSA252)</name>
    <dbReference type="NCBI Taxonomy" id="282458"/>
    <lineage>
        <taxon>Bacteria</taxon>
        <taxon>Bacillati</taxon>
        <taxon>Bacillota</taxon>
        <taxon>Bacilli</taxon>
        <taxon>Bacillales</taxon>
        <taxon>Staphylococcaceae</taxon>
        <taxon>Staphylococcus</taxon>
    </lineage>
</organism>
<reference key="1">
    <citation type="journal article" date="2004" name="Proc. Natl. Acad. Sci. U.S.A.">
        <title>Complete genomes of two clinical Staphylococcus aureus strains: evidence for the rapid evolution of virulence and drug resistance.</title>
        <authorList>
            <person name="Holden M.T.G."/>
            <person name="Feil E.J."/>
            <person name="Lindsay J.A."/>
            <person name="Peacock S.J."/>
            <person name="Day N.P.J."/>
            <person name="Enright M.C."/>
            <person name="Foster T.J."/>
            <person name="Moore C.E."/>
            <person name="Hurst L."/>
            <person name="Atkin R."/>
            <person name="Barron A."/>
            <person name="Bason N."/>
            <person name="Bentley S.D."/>
            <person name="Chillingworth C."/>
            <person name="Chillingworth T."/>
            <person name="Churcher C."/>
            <person name="Clark L."/>
            <person name="Corton C."/>
            <person name="Cronin A."/>
            <person name="Doggett J."/>
            <person name="Dowd L."/>
            <person name="Feltwell T."/>
            <person name="Hance Z."/>
            <person name="Harris B."/>
            <person name="Hauser H."/>
            <person name="Holroyd S."/>
            <person name="Jagels K."/>
            <person name="James K.D."/>
            <person name="Lennard N."/>
            <person name="Line A."/>
            <person name="Mayes R."/>
            <person name="Moule S."/>
            <person name="Mungall K."/>
            <person name="Ormond D."/>
            <person name="Quail M.A."/>
            <person name="Rabbinowitsch E."/>
            <person name="Rutherford K.M."/>
            <person name="Sanders M."/>
            <person name="Sharp S."/>
            <person name="Simmonds M."/>
            <person name="Stevens K."/>
            <person name="Whitehead S."/>
            <person name="Barrell B.G."/>
            <person name="Spratt B.G."/>
            <person name="Parkhill J."/>
        </authorList>
    </citation>
    <scope>NUCLEOTIDE SEQUENCE [LARGE SCALE GENOMIC DNA]</scope>
    <source>
        <strain>MRSA252</strain>
    </source>
</reference>
<feature type="chain" id="PRO_0000274822" description="Lysostaphin resistance protein A">
    <location>
        <begin position="1"/>
        <end position="419"/>
    </location>
</feature>
<feature type="transmembrane region" description="Helical" evidence="3">
    <location>
        <begin position="9"/>
        <end position="29"/>
    </location>
</feature>
<feature type="transmembrane region" description="Helical" evidence="3">
    <location>
        <begin position="41"/>
        <end position="61"/>
    </location>
</feature>
<feature type="transmembrane region" description="Helical" evidence="3">
    <location>
        <begin position="84"/>
        <end position="104"/>
    </location>
</feature>
<feature type="transmembrane region" description="Helical" evidence="3">
    <location>
        <begin position="118"/>
        <end position="138"/>
    </location>
</feature>
<feature type="transmembrane region" description="Helical" evidence="3">
    <location>
        <begin position="152"/>
        <end position="172"/>
    </location>
</feature>
<feature type="transmembrane region" description="Helical" evidence="3">
    <location>
        <begin position="175"/>
        <end position="195"/>
    </location>
</feature>
<feature type="transmembrane region" description="Helical" evidence="3">
    <location>
        <begin position="202"/>
        <end position="222"/>
    </location>
</feature>
<feature type="transmembrane region" description="Helical" evidence="3">
    <location>
        <begin position="231"/>
        <end position="251"/>
    </location>
</feature>
<feature type="region of interest" description="Disordered" evidence="4">
    <location>
        <begin position="273"/>
        <end position="419"/>
    </location>
</feature>
<feature type="compositionally biased region" description="Basic and acidic residues" evidence="4">
    <location>
        <begin position="282"/>
        <end position="299"/>
    </location>
</feature>
<feature type="compositionally biased region" description="Basic and acidic residues" evidence="4">
    <location>
        <begin position="323"/>
        <end position="353"/>
    </location>
</feature>
<feature type="compositionally biased region" description="Acidic residues" evidence="4">
    <location>
        <begin position="372"/>
        <end position="382"/>
    </location>
</feature>
<feature type="compositionally biased region" description="Basic and acidic residues" evidence="4">
    <location>
        <begin position="383"/>
        <end position="419"/>
    </location>
</feature>
<evidence type="ECO:0000250" key="1">
    <source>
        <dbReference type="UniProtKB" id="A0A0H3KA40"/>
    </source>
</evidence>
<evidence type="ECO:0000250" key="2">
    <source>
        <dbReference type="UniProtKB" id="Q2FVT1"/>
    </source>
</evidence>
<evidence type="ECO:0000255" key="3"/>
<evidence type="ECO:0000256" key="4">
    <source>
        <dbReference type="SAM" id="MobiDB-lite"/>
    </source>
</evidence>
<evidence type="ECO:0000305" key="5"/>
<accession>Q6GEA0</accession>
<gene>
    <name type="primary">lyrA</name>
    <name evidence="1" type="synonym">spdC</name>
    <name type="ordered locus">SAR2421</name>
</gene>
<proteinExistence type="inferred from homology"/>
<dbReference type="EMBL" id="BX571856">
    <property type="protein sequence ID" value="CAG41401.1"/>
    <property type="molecule type" value="Genomic_DNA"/>
</dbReference>
<dbReference type="RefSeq" id="WP_000794464.1">
    <property type="nucleotide sequence ID" value="NC_002952.2"/>
</dbReference>
<dbReference type="SMR" id="Q6GEA0"/>
<dbReference type="KEGG" id="sar:SAR2421"/>
<dbReference type="HOGENOM" id="CLU_046135_0_0_9"/>
<dbReference type="Proteomes" id="UP000000596">
    <property type="component" value="Chromosome"/>
</dbReference>
<dbReference type="GO" id="GO:0005886">
    <property type="term" value="C:plasma membrane"/>
    <property type="evidence" value="ECO:0007669"/>
    <property type="project" value="UniProtKB-SubCell"/>
</dbReference>
<dbReference type="GO" id="GO:0004175">
    <property type="term" value="F:endopeptidase activity"/>
    <property type="evidence" value="ECO:0007669"/>
    <property type="project" value="UniProtKB-ARBA"/>
</dbReference>
<dbReference type="GO" id="GO:0080120">
    <property type="term" value="P:CAAX-box protein maturation"/>
    <property type="evidence" value="ECO:0007669"/>
    <property type="project" value="UniProtKB-ARBA"/>
</dbReference>
<dbReference type="InterPro" id="IPR003675">
    <property type="entry name" value="Rce1/LyrA-like_dom"/>
</dbReference>
<dbReference type="Pfam" id="PF02517">
    <property type="entry name" value="Rce1-like"/>
    <property type="match status" value="1"/>
</dbReference>
<name>LYRA_STAAR</name>
<sequence length="419" mass="46901">MKNNKISGFQWAMTIFVFFVITMALSIMLRDFQSVIGVKHFIFEVTDLAPLIAAIICILVFKYKKIQLAGLKFSISLKVIERLLLALILPLIILIIGMYSFNTFADSFILLQSTGLSVPITHILIGHILMAFVVEFGFRSYLQNIVETKMNTFFASIVVGLMYSVFSANTTYDTEFAAYNFLYTFSFSMILGELIRATKGRTIYIATTFHASMTFGLIFLFSEEIGDLFSIKVIAISTAIVAVGYIGLSLIIRGIAYLTTRRNLEELEPNNYLDHVNDDEETNHTEAEKSSSNIKDAEKTGVATASTVGIAKNDTENTVADEPSIHEGTEKTESQHHIDNQTESNHDEDHDITSKSVESAESVKHAPQSDDLTNDSNEDETEQSLKEPATYKEDRRSSVVIDAEKHIEKTEEQSSDKNK</sequence>
<protein>
    <recommendedName>
        <fullName>Lysostaphin resistance protein A</fullName>
    </recommendedName>
    <alternativeName>
        <fullName evidence="1">Surface protein display C</fullName>
    </alternativeName>
</protein>
<comment type="function">
    <text evidence="1 2">Involved in bacterial cell envelope homeostasis. Regulates peptidoglycan processing by N-acetylglucosaminidase SagB, perhaps acting as a scaffold protein. Pleiotropic regulator of gene expression, probably acting via interactions with multiple two-component systems (By similarity). Plays a role in the abundant deposition of the immunoglobulin G-binding protein A (spa) at the cross-wall, a subcellular structure that initially arises from cytokinesis (By similarity).</text>
</comment>
<comment type="subunit">
    <text evidence="2">Interacts with N-acetylglucosaminidase SagB; interaction is direct and facilitates peptidoglycan processing. Interacts (via N-terminal region including transmembrane domains) with sensor protein kinase WalK (via N-terminal region including transmembrane domains). Interacts (via N-terminal region including transmembrane domains) with sensor protein kinase SaeS. Interacts with other histidine kinases, perhaps via their transmembrane domains.</text>
</comment>
<comment type="subcellular location">
    <subcellularLocation>
        <location evidence="2">Cell membrane</location>
        <topology evidence="2">Multi-pass membrane protein</topology>
    </subcellularLocation>
    <subcellularLocation>
        <location evidence="1">Secreted</location>
        <location evidence="1">Cell wall</location>
    </subcellularLocation>
    <subcellularLocation>
        <location evidence="2">Cell septum</location>
    </subcellularLocation>
    <text evidence="1">Localization to the cross-wall is enriched in dividing cells.</text>
</comment>
<comment type="domain">
    <text evidence="2">C-terminal region not involved in glucosaminidase activity of the SagB-SpdC/LyrA complex.</text>
</comment>
<comment type="similarity">
    <text evidence="5">Belongs to the LyrA family.</text>
</comment>